<reference evidence="10" key="1">
    <citation type="journal article" date="1998" name="Science">
        <title>Genome sequence of the nematode C. elegans: a platform for investigating biology.</title>
        <authorList>
            <consortium name="The C. elegans sequencing consortium"/>
        </authorList>
    </citation>
    <scope>NUCLEOTIDE SEQUENCE [LARGE SCALE GENOMIC DNA]</scope>
    <source>
        <strain evidence="10">Bristol N2</strain>
    </source>
</reference>
<reference evidence="9" key="2">
    <citation type="journal article" date="2014" name="Cell Metab.">
        <title>Control of metazoan heme homeostasis by a conserved multidrug resistance protein.</title>
        <authorList>
            <person name="Korolnek T."/>
            <person name="Zhang J."/>
            <person name="Beardsley S."/>
            <person name="Scheffer G.L."/>
            <person name="Hamza I."/>
        </authorList>
    </citation>
    <scope>FUNCTION</scope>
    <scope>SUBCELLULAR LOCATION</scope>
    <scope>TISSUE SPECIFICITY</scope>
    <scope>DEVELOPMENTAL STAGE</scope>
    <scope>DISRUPTION PHENOTYPE</scope>
</reference>
<reference evidence="9" key="3">
    <citation type="journal article" date="2017" name="Nat. Cell Biol.">
        <title>Inter-organ signalling by HRG-7 promotes systemic haem homeostasis.</title>
        <authorList>
            <person name="Sinclair J."/>
            <person name="Pinter K."/>
            <person name="Samuel T."/>
            <person name="Beardsley S."/>
            <person name="Yuan X."/>
            <person name="Zhang J."/>
            <person name="Meng K."/>
            <person name="Yun S."/>
            <person name="Krause M."/>
            <person name="Hamza I."/>
        </authorList>
    </citation>
    <scope>FUNCTION</scope>
    <scope>DISRUPTION PHENOTYPE</scope>
</reference>
<reference evidence="9" key="4">
    <citation type="journal article" date="2018" name="Cell Rep.">
        <title>C. elegans MRP-5 Exports Vitamin B12 from Mother to Offspring to Support Embryonic Development.</title>
        <authorList>
            <person name="Na H."/>
            <person name="Ponomarova O."/>
            <person name="Giese G.E."/>
            <person name="Walhout A.J.M."/>
        </authorList>
    </citation>
    <scope>FUNCTION</scope>
    <scope>TISSUE SPECIFICITY</scope>
    <scope>DISRUPTION PHENOTYPE</scope>
</reference>
<evidence type="ECO:0000255" key="1"/>
<evidence type="ECO:0000255" key="2">
    <source>
        <dbReference type="PROSITE-ProRule" id="PRU00434"/>
    </source>
</evidence>
<evidence type="ECO:0000255" key="3">
    <source>
        <dbReference type="PROSITE-ProRule" id="PRU00441"/>
    </source>
</evidence>
<evidence type="ECO:0000255" key="4">
    <source>
        <dbReference type="PROSITE-ProRule" id="PRU00498"/>
    </source>
</evidence>
<evidence type="ECO:0000256" key="5">
    <source>
        <dbReference type="SAM" id="MobiDB-lite"/>
    </source>
</evidence>
<evidence type="ECO:0000269" key="6">
    <source>
    </source>
</evidence>
<evidence type="ECO:0000269" key="7">
    <source>
    </source>
</evidence>
<evidence type="ECO:0000269" key="8">
    <source>
    </source>
</evidence>
<evidence type="ECO:0000305" key="9"/>
<evidence type="ECO:0000312" key="10">
    <source>
        <dbReference type="Proteomes" id="UP000001940"/>
    </source>
</evidence>
<evidence type="ECO:0000312" key="11">
    <source>
        <dbReference type="WormBase" id="F14F4.3"/>
    </source>
</evidence>
<protein>
    <recommendedName>
        <fullName evidence="11">Multidrug resistance-associated protein 5</fullName>
    </recommendedName>
    <alternativeName>
        <fullName evidence="9">ATP-binding cassette sub-family C member mrp-5</fullName>
    </alternativeName>
</protein>
<dbReference type="EMBL" id="BX284606">
    <property type="protein sequence ID" value="CAB54225.1"/>
    <property type="molecule type" value="Genomic_DNA"/>
</dbReference>
<dbReference type="PIR" id="T20903">
    <property type="entry name" value="T20903"/>
</dbReference>
<dbReference type="PIR" id="T20904">
    <property type="entry name" value="T20904"/>
</dbReference>
<dbReference type="RefSeq" id="NP_510479.1">
    <property type="nucleotide sequence ID" value="NM_078078.4"/>
</dbReference>
<dbReference type="SMR" id="G5EE72"/>
<dbReference type="FunCoup" id="G5EE72">
    <property type="interactions" value="743"/>
</dbReference>
<dbReference type="STRING" id="6239.F14F4.3.1"/>
<dbReference type="GlyCosmos" id="G5EE72">
    <property type="glycosylation" value="1 site, No reported glycans"/>
</dbReference>
<dbReference type="PaxDb" id="6239-F14F4.3b"/>
<dbReference type="PeptideAtlas" id="G5EE72"/>
<dbReference type="EnsemblMetazoa" id="F14F4.3.1">
    <property type="protein sequence ID" value="F14F4.3.1"/>
    <property type="gene ID" value="WBGene00003411"/>
</dbReference>
<dbReference type="GeneID" id="181587"/>
<dbReference type="KEGG" id="cel:CELE_F14F4.3"/>
<dbReference type="AGR" id="WB:WBGene00003411"/>
<dbReference type="CTD" id="181587"/>
<dbReference type="WormBase" id="F14F4.3">
    <property type="protein sequence ID" value="CE23650"/>
    <property type="gene ID" value="WBGene00003411"/>
    <property type="gene designation" value="mrp-5"/>
</dbReference>
<dbReference type="eggNOG" id="KOG0054">
    <property type="taxonomic scope" value="Eukaryota"/>
</dbReference>
<dbReference type="InParanoid" id="G5EE72"/>
<dbReference type="OMA" id="IRCIRVI"/>
<dbReference type="OrthoDB" id="6500128at2759"/>
<dbReference type="PhylomeDB" id="G5EE72"/>
<dbReference type="Reactome" id="R-CEL-2142850">
    <property type="pathway name" value="Hyaluronan biosynthesis and export"/>
</dbReference>
<dbReference type="Reactome" id="R-CEL-382556">
    <property type="pathway name" value="ABC-family proteins mediated transport"/>
</dbReference>
<dbReference type="Reactome" id="R-CEL-9748787">
    <property type="pathway name" value="Azathioprine ADME"/>
</dbReference>
<dbReference type="Reactome" id="R-CEL-9753281">
    <property type="pathway name" value="Paracetamol ADME"/>
</dbReference>
<dbReference type="PRO" id="PR:G5EE72"/>
<dbReference type="Proteomes" id="UP000001940">
    <property type="component" value="Chromosome X"/>
</dbReference>
<dbReference type="Bgee" id="WBGene00003411">
    <property type="expression patterns" value="Expressed in material anatomical entity and 5 other cell types or tissues"/>
</dbReference>
<dbReference type="GO" id="GO:0016323">
    <property type="term" value="C:basolateral plasma membrane"/>
    <property type="evidence" value="ECO:0000305"/>
    <property type="project" value="WormBase"/>
</dbReference>
<dbReference type="GO" id="GO:0016020">
    <property type="term" value="C:membrane"/>
    <property type="evidence" value="ECO:0000318"/>
    <property type="project" value="GO_Central"/>
</dbReference>
<dbReference type="GO" id="GO:0015420">
    <property type="term" value="F:ABC-type vitamin B12 transporter activity"/>
    <property type="evidence" value="ECO:0000315"/>
    <property type="project" value="WormBase"/>
</dbReference>
<dbReference type="GO" id="GO:0005524">
    <property type="term" value="F:ATP binding"/>
    <property type="evidence" value="ECO:0007669"/>
    <property type="project" value="UniProtKB-KW"/>
</dbReference>
<dbReference type="GO" id="GO:0016887">
    <property type="term" value="F:ATP hydrolysis activity"/>
    <property type="evidence" value="ECO:0007669"/>
    <property type="project" value="InterPro"/>
</dbReference>
<dbReference type="GO" id="GO:0042626">
    <property type="term" value="F:ATPase-coupled transmembrane transporter activity"/>
    <property type="evidence" value="ECO:0000318"/>
    <property type="project" value="GO_Central"/>
</dbReference>
<dbReference type="GO" id="GO:0015889">
    <property type="term" value="P:cobalamin transport"/>
    <property type="evidence" value="ECO:0000315"/>
    <property type="project" value="WormBase"/>
</dbReference>
<dbReference type="GO" id="GO:0055085">
    <property type="term" value="P:transmembrane transport"/>
    <property type="evidence" value="ECO:0000318"/>
    <property type="project" value="GO_Central"/>
</dbReference>
<dbReference type="CDD" id="cd18592">
    <property type="entry name" value="ABC_6TM_MRP5_8_9_D1"/>
    <property type="match status" value="1"/>
</dbReference>
<dbReference type="CDD" id="cd18599">
    <property type="entry name" value="ABC_6TM_MRP5_8_9_D2"/>
    <property type="match status" value="1"/>
</dbReference>
<dbReference type="CDD" id="cd03244">
    <property type="entry name" value="ABCC_MRP_domain2"/>
    <property type="match status" value="1"/>
</dbReference>
<dbReference type="FunFam" id="3.40.50.300:FF:000838">
    <property type="entry name" value="ABC multidrug transporter (Eurofung)"/>
    <property type="match status" value="1"/>
</dbReference>
<dbReference type="FunFam" id="1.20.1560.10:FF:000015">
    <property type="entry name" value="multidrug resistance-associated protein 5 isoform X1"/>
    <property type="match status" value="1"/>
</dbReference>
<dbReference type="FunFam" id="1.20.1560.10:FF:000162">
    <property type="entry name" value="Predicted protein"/>
    <property type="match status" value="1"/>
</dbReference>
<dbReference type="FunFam" id="3.40.50.300:FF:003782">
    <property type="entry name" value="Predicted protein"/>
    <property type="match status" value="1"/>
</dbReference>
<dbReference type="Gene3D" id="1.20.1560.10">
    <property type="entry name" value="ABC transporter type 1, transmembrane domain"/>
    <property type="match status" value="2"/>
</dbReference>
<dbReference type="Gene3D" id="3.40.50.300">
    <property type="entry name" value="P-loop containing nucleotide triphosphate hydrolases"/>
    <property type="match status" value="2"/>
</dbReference>
<dbReference type="InterPro" id="IPR003593">
    <property type="entry name" value="AAA+_ATPase"/>
</dbReference>
<dbReference type="InterPro" id="IPR011527">
    <property type="entry name" value="ABC1_TM_dom"/>
</dbReference>
<dbReference type="InterPro" id="IPR036640">
    <property type="entry name" value="ABC1_TM_sf"/>
</dbReference>
<dbReference type="InterPro" id="IPR003439">
    <property type="entry name" value="ABC_transporter-like_ATP-bd"/>
</dbReference>
<dbReference type="InterPro" id="IPR017871">
    <property type="entry name" value="ABC_transporter-like_CS"/>
</dbReference>
<dbReference type="InterPro" id="IPR050173">
    <property type="entry name" value="ABC_transporter_C-like"/>
</dbReference>
<dbReference type="InterPro" id="IPR027417">
    <property type="entry name" value="P-loop_NTPase"/>
</dbReference>
<dbReference type="PANTHER" id="PTHR24223">
    <property type="entry name" value="ATP-BINDING CASSETTE SUB-FAMILY C"/>
    <property type="match status" value="1"/>
</dbReference>
<dbReference type="PANTHER" id="PTHR24223:SF447">
    <property type="entry name" value="MULTIDRUG RESISTANCE-ASSOCIATED PROTEIN 5"/>
    <property type="match status" value="1"/>
</dbReference>
<dbReference type="Pfam" id="PF00664">
    <property type="entry name" value="ABC_membrane"/>
    <property type="match status" value="2"/>
</dbReference>
<dbReference type="Pfam" id="PF00005">
    <property type="entry name" value="ABC_tran"/>
    <property type="match status" value="2"/>
</dbReference>
<dbReference type="SMART" id="SM00382">
    <property type="entry name" value="AAA"/>
    <property type="match status" value="2"/>
</dbReference>
<dbReference type="SUPFAM" id="SSF90123">
    <property type="entry name" value="ABC transporter transmembrane region"/>
    <property type="match status" value="2"/>
</dbReference>
<dbReference type="SUPFAM" id="SSF52540">
    <property type="entry name" value="P-loop containing nucleoside triphosphate hydrolases"/>
    <property type="match status" value="2"/>
</dbReference>
<dbReference type="PROSITE" id="PS50929">
    <property type="entry name" value="ABC_TM1F"/>
    <property type="match status" value="2"/>
</dbReference>
<dbReference type="PROSITE" id="PS00211">
    <property type="entry name" value="ABC_TRANSPORTER_1"/>
    <property type="match status" value="2"/>
</dbReference>
<dbReference type="PROSITE" id="PS50893">
    <property type="entry name" value="ABC_TRANSPORTER_2"/>
    <property type="match status" value="2"/>
</dbReference>
<gene>
    <name evidence="11" type="primary">mrp-5</name>
    <name evidence="11" type="ORF">F14F4.3</name>
</gene>
<keyword id="KW-0067">ATP-binding</keyword>
<keyword id="KW-1003">Cell membrane</keyword>
<keyword id="KW-0325">Glycoprotein</keyword>
<keyword id="KW-0472">Membrane</keyword>
<keyword id="KW-0547">Nucleotide-binding</keyword>
<keyword id="KW-1185">Reference proteome</keyword>
<keyword id="KW-0677">Repeat</keyword>
<keyword id="KW-0812">Transmembrane</keyword>
<keyword id="KW-1133">Transmembrane helix</keyword>
<keyword id="KW-0813">Transport</keyword>
<accession>G5EE72</accession>
<proteinExistence type="evidence at transcript level"/>
<comment type="function">
    <text evidence="6 7 8">Heme transporter required for the export of intestinal heme to different tissues and subcellular compartments (PubMed:24836561, PubMed:28581477). Also, required for the export of vitamin B12 from the intestine of the mother to the embryo to support embryonic development (PubMed:29562169).</text>
</comment>
<comment type="subcellular location">
    <subcellularLocation>
        <location evidence="6">Basolateral cell membrane</location>
        <topology evidence="1">Multi-pass membrane protein</topology>
    </subcellularLocation>
</comment>
<comment type="tissue specificity">
    <text evidence="6 8">Highly expressed in the intestine and pharynx (PubMed:24836561, PubMed:29562169). Expressed at low levels in the hypodermis and in some neurons (PubMed:24836561).</text>
</comment>
<comment type="developmental stage">
    <text evidence="6">Expressed throughout development.</text>
</comment>
<comment type="disruption phenotype">
    <text evidence="6 7 8">RNAi-mediated knockdown in larvae does not result in any obvious developmental defects and animals are able to reach the adult gravid stage and lay eggs (PubMed:24836561). However, 80% of the eggs laid fail to hatch, and the animals that hatch do not survive beyond the L1 larval stage (PubMed:24836561). RNAi-mediated knockdown in larvae results in the heme accumulation in the intestine under low heme conditions (PubMed:28581477). RNAi-mediated knockdown in larvae results in an accumulation of vitamin B12 in the intestine and defective vitamin B12 transport from mother to dead embryos (PubMed:29562169). Furthermore, embryos of RNAi-treated mothers also have defects in vitamin B12 metabolism and have reduced levels of methionine and S-adenosylmethionine (PubMed:29562169). Double RNAi-mediated knockdown with hrg-7 in larvae results in defective heme sensing (PubMed:28581477).</text>
</comment>
<comment type="similarity">
    <text evidence="9">Belongs to the ABC transporter superfamily. ABCC family. Conjugate transporter (TC 3.A.1.208) subfamily.</text>
</comment>
<sequence length="1427" mass="158686">MPSDSEEVCLQQSGTGVYENVVYSKETSDRAKRYAGDTNRKTIGRYSAAVQNLIPLRTTERNKNNGGSRIDDAGLFSFVTYSWVFPYLYQAVRGKLDRNQVWGCSFYDSCGLNMARLEVLWEDEKKANAKSPSLFKVIYRFISTRLWFSCAVFFFCLIFGFIGPTCFIRRLIAFAENPERDEQSRIVYSYGIALVAAISVVEFARVLSYGATWAVSYRTGIRVRGAVLALLYKNVLNSKDLCGKTESDVINIFANDGQRLFDAVTFAPLVLVGPLVLVGGIGYLLMVIGRWSLLGILVFFVFDVIQFGLGKSMVACRNLAIVKTEKRISMMAEIIKYIRIVKMNGWEQIFSAKIDQFRKEEKVQIRKSGYAQSLAIACGPVVPVVAAILTFVGVVLAGNDLLASDAFSAITVYFVMLFGIRMIPYGSRYLAEAVVAMRRIQEYLLLEQYAPYPVTNAEDVVLDCQGATYTYQPKAAKAPVDETKEPTENEVIVVETPVFTCSFDKLSIKRGEHIAVIGAVGCGKSAILKAISGHMFTTDDALSVDRSQTVYVPQKAWIFNGTVQDNILFGDKMNSERYYKAVNGCQLTEDLTTLSVGDRTEVGERGATLSGGQKARVALARAVFQTKNLYLFDDIFASLDKKVANKIHEEIIQKLLKKKALMMVTNNMELLHHFDRVLFVEGGNIVADGNHDILYEKNDAYKTFVDACETYQATSGATSPCGDGPAQPAPLDAEILRNSSEDLKGDADKLISDEEDMGNSTIAWRIYKQYIHAAGGWPIWTCLVIGFIVNVVSNIFSTYWLSRWLKKGHDETTTITNGTEFLEMKTSLADSPVTGFYAAVYLVALVVLTISGLFKACVFVKVSLTAATRLHDRMFQAVIHGATSFFDSTPTGRILNRFSKDMDEIDVKLPFTAEVFLQNMITCLGFLVVITSVFPYFLLFAIPLFVVFVVFVSCFRAGIRNLKRSEHISRSPLYDHVSASLEGITTIHTFQQSNRFLEVLKKHLDCNSGAIFMFQSAMRWLAVWLDLLVVVMTAIVALLTVMLTGTVSPADAGMAIAFAVQMSGIFQFAVRTQTELEAKMTSVERVSYYADNIPEDGEWNTRQGLDIESSWPANGQINFSEVNLRYRKSHPLALNDITFEIKGGEKVGIIGRTGSGKSSLANLIFRLYPVTNGTIYIDGVDIRTVGLVKLRRGISAIAQDPSLFSGTVRFNLDPSLEYSDSMIWEALEKCHLKTLVQSLDKKLEADVSHGGNNFSVGERQLFCLARALLMKSRIVILDEATASVDAGTDKLIQEVIKTVFADATVIIIAHRLDNVRNMDRIMHLKNGKLINFTTPQEMFKDDWSVYKLEDKDDDQHSAVVVGENSEHSMEKSSQGSSQESDDIVKVENEQKDSSDDVVHIESGDDDVKADSSEVKETSSDTDIEVVQ</sequence>
<name>MRP5_CAEEL</name>
<feature type="chain" id="PRO_0000449291" description="Multidrug resistance-associated protein 5">
    <location>
        <begin position="1"/>
        <end position="1427"/>
    </location>
</feature>
<feature type="topological domain" description="Cytoplasmic" evidence="9">
    <location>
        <begin position="1"/>
        <end position="147"/>
    </location>
</feature>
<feature type="transmembrane region" description="Helical" evidence="1 3">
    <location>
        <begin position="148"/>
        <end position="168"/>
    </location>
</feature>
<feature type="topological domain" description="Extracellular" evidence="9">
    <location>
        <begin position="169"/>
        <end position="185"/>
    </location>
</feature>
<feature type="transmembrane region" description="Helical" evidence="1 3">
    <location>
        <begin position="186"/>
        <end position="206"/>
    </location>
</feature>
<feature type="topological domain" description="Cytoplasmic" evidence="9">
    <location>
        <begin position="207"/>
        <end position="268"/>
    </location>
</feature>
<feature type="transmembrane region" description="Helical" evidence="1 3">
    <location>
        <begin position="269"/>
        <end position="289"/>
    </location>
</feature>
<feature type="topological domain" description="Extracellular" evidence="9">
    <location>
        <position position="290"/>
    </location>
</feature>
<feature type="transmembrane region" description="Helical" evidence="1 3">
    <location>
        <begin position="291"/>
        <end position="311"/>
    </location>
</feature>
<feature type="topological domain" description="Cytoplasmic" evidence="9">
    <location>
        <begin position="312"/>
        <end position="375"/>
    </location>
</feature>
<feature type="transmembrane region" description="Helical" evidence="1 3">
    <location>
        <begin position="376"/>
        <end position="396"/>
    </location>
</feature>
<feature type="topological domain" description="Extracellular" evidence="9">
    <location>
        <begin position="397"/>
        <end position="399"/>
    </location>
</feature>
<feature type="transmembrane region" description="Helical" evidence="1 3">
    <location>
        <begin position="400"/>
        <end position="420"/>
    </location>
</feature>
<feature type="topological domain" description="Cytoplasmic" evidence="9">
    <location>
        <begin position="421"/>
        <end position="770"/>
    </location>
</feature>
<feature type="transmembrane region" description="Helical" evidence="1">
    <location>
        <begin position="771"/>
        <end position="791"/>
    </location>
</feature>
<feature type="topological domain" description="Extracellular" evidence="9">
    <location>
        <begin position="792"/>
        <end position="833"/>
    </location>
</feature>
<feature type="transmembrane region" description="Helical" evidence="1 3">
    <location>
        <begin position="834"/>
        <end position="854"/>
    </location>
</feature>
<feature type="topological domain" description="Cytoplasmic" evidence="9">
    <location>
        <begin position="855"/>
        <end position="909"/>
    </location>
</feature>
<feature type="transmembrane region" description="Helical" evidence="1 3">
    <location>
        <begin position="910"/>
        <end position="930"/>
    </location>
</feature>
<feature type="topological domain" description="Extracellular" evidence="9">
    <location>
        <position position="931"/>
    </location>
</feature>
<feature type="transmembrane region" description="Helical" evidence="1 3">
    <location>
        <begin position="932"/>
        <end position="952"/>
    </location>
</feature>
<feature type="topological domain" description="Cytoplasmic" evidence="9">
    <location>
        <begin position="953"/>
        <end position="1022"/>
    </location>
</feature>
<feature type="transmembrane region" description="Helical" evidence="1 3">
    <location>
        <begin position="1023"/>
        <end position="1043"/>
    </location>
</feature>
<feature type="topological domain" description="Extracellular" evidence="9">
    <location>
        <begin position="1044"/>
        <end position="1049"/>
    </location>
</feature>
<feature type="transmembrane region" description="Helical" evidence="1 3">
    <location>
        <begin position="1050"/>
        <end position="1070"/>
    </location>
</feature>
<feature type="topological domain" description="Cytoplasmic" evidence="9">
    <location>
        <begin position="1071"/>
        <end position="1427"/>
    </location>
</feature>
<feature type="domain" description="ABC transmembrane type-1 1" evidence="3">
    <location>
        <begin position="151"/>
        <end position="432"/>
    </location>
</feature>
<feature type="domain" description="ABC transporter 1" evidence="2">
    <location>
        <begin position="486"/>
        <end position="707"/>
    </location>
</feature>
<feature type="domain" description="ABC transmembrane type-1 2" evidence="3">
    <location>
        <begin position="783"/>
        <end position="1078"/>
    </location>
</feature>
<feature type="domain" description="ABC transporter 2" evidence="2">
    <location>
        <begin position="1117"/>
        <end position="1351"/>
    </location>
</feature>
<feature type="region of interest" description="Disordered" evidence="5">
    <location>
        <begin position="1361"/>
        <end position="1427"/>
    </location>
</feature>
<feature type="compositionally biased region" description="Basic and acidic residues" evidence="5">
    <location>
        <begin position="1382"/>
        <end position="1418"/>
    </location>
</feature>
<feature type="binding site" evidence="2">
    <location>
        <begin position="518"/>
        <end position="525"/>
    </location>
    <ligand>
        <name>ATP</name>
        <dbReference type="ChEBI" id="CHEBI:30616"/>
    </ligand>
</feature>
<feature type="binding site" evidence="2">
    <location>
        <begin position="1151"/>
        <end position="1158"/>
    </location>
    <ligand>
        <name>ATP</name>
        <dbReference type="ChEBI" id="CHEBI:30616"/>
    </ligand>
</feature>
<feature type="glycosylation site" description="N-linked (GlcNAc...) asparagine" evidence="4">
    <location>
        <position position="817"/>
    </location>
</feature>
<organism evidence="10">
    <name type="scientific">Caenorhabditis elegans</name>
    <dbReference type="NCBI Taxonomy" id="6239"/>
    <lineage>
        <taxon>Eukaryota</taxon>
        <taxon>Metazoa</taxon>
        <taxon>Ecdysozoa</taxon>
        <taxon>Nematoda</taxon>
        <taxon>Chromadorea</taxon>
        <taxon>Rhabditida</taxon>
        <taxon>Rhabditina</taxon>
        <taxon>Rhabditomorpha</taxon>
        <taxon>Rhabditoidea</taxon>
        <taxon>Rhabditidae</taxon>
        <taxon>Peloderinae</taxon>
        <taxon>Caenorhabditis</taxon>
    </lineage>
</organism>